<sequence>MTTRTATSTSTTVHGHLGDLKLRNAAITGPHLQPKAAKQDLADTKPDSARTFPGLGFKLSPTEERLRAKRNWGFLETAYDNSKVMGLTTHFVTITMAIVFNKSWLAKPVYDWLNTYDRFTIHTVHTWILLSTCQLLVIGLFALTDLSGRPSWLARYRMQPHKPPTLAQYKKLIPVVLFNLVVVNTISNIIYYPLAEWRGIQTTYETLPSGKKLVAQWLVCLLMEDIGFYTVHRALHHPRIYKYIHKKHHEFSAPIAGASTYAHPLEHYFSNLVPILVGLLITRAHISVQYLFFTGLMIGSHVQHSGYNIPFLTCALVHDWHHYFNTENYGPVGLLDAIFKTNKTFKAWTSETVAAFHGDRAKARQAALEKLAQIEAEEQERIR</sequence>
<organism>
    <name type="scientific">Mycosarcoma maydis</name>
    <name type="common">Corn smut fungus</name>
    <name type="synonym">Ustilago maydis</name>
    <dbReference type="NCBI Taxonomy" id="5270"/>
    <lineage>
        <taxon>Eukaryota</taxon>
        <taxon>Fungi</taxon>
        <taxon>Dikarya</taxon>
        <taxon>Basidiomycota</taxon>
        <taxon>Ustilaginomycotina</taxon>
        <taxon>Ustilaginomycetes</taxon>
        <taxon>Ustilaginales</taxon>
        <taxon>Ustilaginaceae</taxon>
        <taxon>Mycosarcoma</taxon>
    </lineage>
</organism>
<dbReference type="EC" id="1.-.-.-" evidence="4"/>
<dbReference type="EMBL" id="CM003162">
    <property type="protein sequence ID" value="KIS65765.1"/>
    <property type="molecule type" value="Genomic_DNA"/>
</dbReference>
<dbReference type="RefSeq" id="XP_011392763.1">
    <property type="nucleotide sequence ID" value="XM_011394461.1"/>
</dbReference>
<dbReference type="STRING" id="237631.A0A0D1DT68"/>
<dbReference type="GlyCosmos" id="A0A0D1DT68">
    <property type="glycosylation" value="1 site, No reported glycans"/>
</dbReference>
<dbReference type="EnsemblFungi" id="KIS65765">
    <property type="protein sequence ID" value="KIS65765"/>
    <property type="gene ID" value="UMAG_12340"/>
</dbReference>
<dbReference type="GeneID" id="23568085"/>
<dbReference type="KEGG" id="uma:UMAG_12340"/>
<dbReference type="VEuPathDB" id="FungiDB:UMAG_12340"/>
<dbReference type="eggNOG" id="KOG0873">
    <property type="taxonomic scope" value="Eukaryota"/>
</dbReference>
<dbReference type="InParanoid" id="A0A0D1DT68"/>
<dbReference type="OrthoDB" id="408954at2759"/>
<dbReference type="Proteomes" id="UP000000561">
    <property type="component" value="Chromosome 23"/>
</dbReference>
<dbReference type="GO" id="GO:0005789">
    <property type="term" value="C:endoplasmic reticulum membrane"/>
    <property type="evidence" value="ECO:0000318"/>
    <property type="project" value="GO_Central"/>
</dbReference>
<dbReference type="GO" id="GO:0000254">
    <property type="term" value="F:C-4 methylsterol oxidase activity"/>
    <property type="evidence" value="ECO:0000318"/>
    <property type="project" value="GO_Central"/>
</dbReference>
<dbReference type="GO" id="GO:0005506">
    <property type="term" value="F:iron ion binding"/>
    <property type="evidence" value="ECO:0007669"/>
    <property type="project" value="InterPro"/>
</dbReference>
<dbReference type="GO" id="GO:0006696">
    <property type="term" value="P:ergosterol biosynthetic process"/>
    <property type="evidence" value="ECO:0000318"/>
    <property type="project" value="GO_Central"/>
</dbReference>
<dbReference type="InterPro" id="IPR006694">
    <property type="entry name" value="Fatty_acid_hydroxylase"/>
</dbReference>
<dbReference type="InterPro" id="IPR050307">
    <property type="entry name" value="Sterol_Desaturase_Related"/>
</dbReference>
<dbReference type="PANTHER" id="PTHR11863">
    <property type="entry name" value="STEROL DESATURASE"/>
    <property type="match status" value="1"/>
</dbReference>
<dbReference type="Pfam" id="PF04116">
    <property type="entry name" value="FA_hydroxylase"/>
    <property type="match status" value="1"/>
</dbReference>
<reference key="1">
    <citation type="journal article" date="2006" name="Nature">
        <title>Insights from the genome of the biotrophic fungal plant pathogen Ustilago maydis.</title>
        <authorList>
            <person name="Kaemper J."/>
            <person name="Kahmann R."/>
            <person name="Boelker M."/>
            <person name="Ma L.-J."/>
            <person name="Brefort T."/>
            <person name="Saville B.J."/>
            <person name="Banuett F."/>
            <person name="Kronstad J.W."/>
            <person name="Gold S.E."/>
            <person name="Mueller O."/>
            <person name="Perlin M.H."/>
            <person name="Woesten H.A.B."/>
            <person name="de Vries R."/>
            <person name="Ruiz-Herrera J."/>
            <person name="Reynaga-Pena C.G."/>
            <person name="Snetselaar K."/>
            <person name="McCann M."/>
            <person name="Perez-Martin J."/>
            <person name="Feldbruegge M."/>
            <person name="Basse C.W."/>
            <person name="Steinberg G."/>
            <person name="Ibeas J.I."/>
            <person name="Holloman W."/>
            <person name="Guzman P."/>
            <person name="Farman M.L."/>
            <person name="Stajich J.E."/>
            <person name="Sentandreu R."/>
            <person name="Gonzalez-Prieto J.M."/>
            <person name="Kennell J.C."/>
            <person name="Molina L."/>
            <person name="Schirawski J."/>
            <person name="Mendoza-Mendoza A."/>
            <person name="Greilinger D."/>
            <person name="Muench K."/>
            <person name="Roessel N."/>
            <person name="Scherer M."/>
            <person name="Vranes M."/>
            <person name="Ladendorf O."/>
            <person name="Vincon V."/>
            <person name="Fuchs U."/>
            <person name="Sandrock B."/>
            <person name="Meng S."/>
            <person name="Ho E.C.H."/>
            <person name="Cahill M.J."/>
            <person name="Boyce K.J."/>
            <person name="Klose J."/>
            <person name="Klosterman S.J."/>
            <person name="Deelstra H.J."/>
            <person name="Ortiz-Castellanos L."/>
            <person name="Li W."/>
            <person name="Sanchez-Alonso P."/>
            <person name="Schreier P.H."/>
            <person name="Haeuser-Hahn I."/>
            <person name="Vaupel M."/>
            <person name="Koopmann E."/>
            <person name="Friedrich G."/>
            <person name="Voss H."/>
            <person name="Schlueter T."/>
            <person name="Margolis J."/>
            <person name="Platt D."/>
            <person name="Swimmer C."/>
            <person name="Gnirke A."/>
            <person name="Chen F."/>
            <person name="Vysotskaia V."/>
            <person name="Mannhaupt G."/>
            <person name="Gueldener U."/>
            <person name="Muensterkoetter M."/>
            <person name="Haase D."/>
            <person name="Oesterheld M."/>
            <person name="Mewes H.-W."/>
            <person name="Mauceli E.W."/>
            <person name="DeCaprio D."/>
            <person name="Wade C.M."/>
            <person name="Butler J."/>
            <person name="Young S.K."/>
            <person name="Jaffe D.B."/>
            <person name="Calvo S.E."/>
            <person name="Nusbaum C."/>
            <person name="Galagan J.E."/>
            <person name="Birren B.W."/>
        </authorList>
    </citation>
    <scope>NUCLEOTIDE SEQUENCE [LARGE SCALE GENOMIC DNA]</scope>
    <source>
        <strain>DSM 14603 / FGSC 9021 / UM521</strain>
    </source>
</reference>
<reference key="2">
    <citation type="submission" date="2014-09" db="EMBL/GenBank/DDBJ databases">
        <authorList>
            <person name="Gueldener U."/>
            <person name="Muensterkoetter M."/>
            <person name="Walter M.C."/>
            <person name="Mannhaupt G."/>
            <person name="Kahmann R."/>
        </authorList>
    </citation>
    <scope>GENOME REANNOTATION</scope>
    <source>
        <strain>DSM 14603 / FGSC 9021 / UM521</strain>
    </source>
</reference>
<reference key="3">
    <citation type="journal article" date="2005" name="Appl. Environ. Microbiol.">
        <title>Genetic analysis of biosurfactant production in Ustilago maydis.</title>
        <authorList>
            <person name="Hewald S."/>
            <person name="Josephs K."/>
            <person name="Boelker M."/>
        </authorList>
    </citation>
    <scope>FUNCTION</scope>
</reference>
<reference key="4">
    <citation type="journal article" date="2007" name="Mol. Microbiol.">
        <title>A biosynthetic gene cluster for a secreted cellobiose lipid with antifungal activity from Ustilago maydis.</title>
        <authorList>
            <person name="Teichmann B."/>
            <person name="Linne U."/>
            <person name="Hewald S."/>
            <person name="Marahiel M.A."/>
            <person name="Boelker M."/>
        </authorList>
    </citation>
    <scope>FUNCTION</scope>
    <scope>INDUCTION</scope>
    <scope>DISRUPTION PHENOTYPE</scope>
    <scope>PATHWAY</scope>
</reference>
<reference key="5">
    <citation type="journal article" date="2010" name="Appl. Environ. Microbiol.">
        <title>Activation of the ustilagic acid biosynthesis gene cluster in Ustilago maydis by the C2H2 zinc finger transcription factor Rua1.</title>
        <authorList>
            <person name="Teichmann B."/>
            <person name="Liu L."/>
            <person name="Schink K.O."/>
            <person name="Boelker M."/>
        </authorList>
    </citation>
    <scope>INDUCTION</scope>
</reference>
<evidence type="ECO:0000255" key="1"/>
<evidence type="ECO:0000255" key="2">
    <source>
        <dbReference type="PROSITE-ProRule" id="PRU00498"/>
    </source>
</evidence>
<evidence type="ECO:0000269" key="3">
    <source>
    </source>
</evidence>
<evidence type="ECO:0000269" key="4">
    <source>
    </source>
</evidence>
<evidence type="ECO:0000269" key="5">
    <source>
    </source>
</evidence>
<evidence type="ECO:0000303" key="6">
    <source>
    </source>
</evidence>
<evidence type="ECO:0000305" key="7"/>
<evidence type="ECO:0000305" key="8">
    <source>
    </source>
</evidence>
<protein>
    <recommendedName>
        <fullName evidence="6">Fatty acid hydroxylase ahd1</fullName>
        <ecNumber evidence="4">1.-.-.-</ecNumber>
    </recommendedName>
    <alternativeName>
        <fullName evidence="6">Ustilagic acid biosynthesis cluster protein ahd1</fullName>
    </alternativeName>
</protein>
<proteinExistence type="evidence at transcript level"/>
<name>AHD1_MYCMD</name>
<accession>A0A0D1DT68</accession>
<gene>
    <name evidence="6" type="primary">ahd1</name>
    <name type="ORF">UMAG_12340</name>
</gene>
<keyword id="KW-0325">Glycoprotein</keyword>
<keyword id="KW-0472">Membrane</keyword>
<keyword id="KW-0560">Oxidoreductase</keyword>
<keyword id="KW-1185">Reference proteome</keyword>
<keyword id="KW-0812">Transmembrane</keyword>
<keyword id="KW-1133">Transmembrane helix</keyword>
<feature type="chain" id="PRO_0000452764" description="Fatty acid hydroxylase ahd1">
    <location>
        <begin position="1"/>
        <end position="383"/>
    </location>
</feature>
<feature type="transmembrane region" description="Helical" evidence="1">
    <location>
        <begin position="84"/>
        <end position="104"/>
    </location>
</feature>
<feature type="transmembrane region" description="Helical" evidence="1">
    <location>
        <begin position="123"/>
        <end position="143"/>
    </location>
</feature>
<feature type="transmembrane region" description="Helical" evidence="1">
    <location>
        <begin position="172"/>
        <end position="192"/>
    </location>
</feature>
<feature type="transmembrane region" description="Helical" evidence="1">
    <location>
        <begin position="214"/>
        <end position="236"/>
    </location>
</feature>
<feature type="domain" description="Fatty acid hydroxylase" evidence="1">
    <location>
        <begin position="217"/>
        <end position="341"/>
    </location>
</feature>
<feature type="glycosylation site" description="N-linked (GlcNAc...) asparagine" evidence="2">
    <location>
        <position position="342"/>
    </location>
</feature>
<comment type="function">
    <text evidence="3 4 8">Fatty acid hydroxylase; part of the gene cluster that mediates the biosynthesis of the glycolipid biosurfactant ustilagic acid (UA) (PubMed:15932999, PubMed:17850255). UA is a secreted cellobiose glycolipid that is toxic for many microorganisms and confers biocontrol activity to U.maydis (PubMed:15932999, PubMed:17850255). UA consists of 15,16-dihydroxypalmitic or 2,15,16-trihydroxypalmitic acid, which is O-glycosidically linked to cellobiose at its terminal hydroxyl group (PubMed:17850255). In addition, the cellobiose moiety is acetylated and acylated with a short-chain hydroxy fatty acid (PubMed:17850255). UA biosynthesis starts with omega-hydroxylation of palmitic acid catalyzed by the cytochrome P450 monooxygenase cyp1 (PubMed:17850255). Terminal hydroxylation of palmitic acid precedes subterminal hydroxylation catalyzed by the cytochrome P450 monooxygenase cyp2 (PubMed:17850255). Sequential glucosylation of the hydroxy fatty acid is probably catalyzed by the glycosyltransferase ugt1 (Probable). The cellobiose lipid is further decorated by acetylation of the proximal glucose residue and by acylation with a short-chain beta-hydroxy fatty acid at the distal glucose residue (Probable). The acyltransferase uat1 may be a good candidate for catalyzing either acetylation or acylation of the cellobiose lipid (Probable). The fatty acid synthase fas2 may be involved in synthesis of the carbon backbone of the short-chain beta-hydroxy fatty acid esterified to the cellobiose disaccharide (Probable). The secreted UA consists of a mixture of both alpha-hydroxylated and non-hydroxylated glycolipids; therefore, alpha-hydroxylation of the long-chain fatty, catalyzed by the fatty acid hydroxylase ahd1, occurs late in UA biosynthesis and may be the last step before secretion (PubMed:17850255).</text>
</comment>
<comment type="pathway">
    <text evidence="4">Secondary metabolite biosynthesis.</text>
</comment>
<comment type="subcellular location">
    <subcellularLocation>
        <location evidence="1">Membrane</location>
        <topology evidence="1">Multi-pass membrane protein</topology>
    </subcellularLocation>
</comment>
<comment type="induction">
    <text evidence="4 5">Expression is strongly induced under conditions of nitrogen starvation (PubMed:17850255). Expression is positively regulated by the cluster-specific transcription factor rua1 that recognizes and binds to the specific 5'-T/G-G/T-C-G-C-A-T-A/T-C/T-C/T-G/A-3' upstream activating sequence found in all promoters of the UA biosynthesis genes (PubMed:20173069).</text>
</comment>
<comment type="disruption phenotype">
    <text evidence="4">Leads to the production of UA derivatives that lack the alpha-hydroxyl group.</text>
</comment>
<comment type="similarity">
    <text evidence="7">Belongs to the sterol desaturase family.</text>
</comment>